<proteinExistence type="inferred from homology"/>
<comment type="function">
    <text evidence="1">Specifically methylates the N4 position of cytidine in position 1402 (C1402) of 16S rRNA.</text>
</comment>
<comment type="catalytic activity">
    <reaction evidence="1">
        <text>cytidine(1402) in 16S rRNA + S-adenosyl-L-methionine = N(4)-methylcytidine(1402) in 16S rRNA + S-adenosyl-L-homocysteine + H(+)</text>
        <dbReference type="Rhea" id="RHEA:42928"/>
        <dbReference type="Rhea" id="RHEA-COMP:10286"/>
        <dbReference type="Rhea" id="RHEA-COMP:10287"/>
        <dbReference type="ChEBI" id="CHEBI:15378"/>
        <dbReference type="ChEBI" id="CHEBI:57856"/>
        <dbReference type="ChEBI" id="CHEBI:59789"/>
        <dbReference type="ChEBI" id="CHEBI:74506"/>
        <dbReference type="ChEBI" id="CHEBI:82748"/>
        <dbReference type="EC" id="2.1.1.199"/>
    </reaction>
</comment>
<comment type="subcellular location">
    <subcellularLocation>
        <location evidence="1">Cytoplasm</location>
    </subcellularLocation>
</comment>
<comment type="similarity">
    <text evidence="1">Belongs to the methyltransferase superfamily. RsmH family.</text>
</comment>
<organism>
    <name type="scientific">Synechococcus elongatus (strain ATCC 33912 / PCC 7942 / FACHB-805)</name>
    <name type="common">Anacystis nidulans R2</name>
    <dbReference type="NCBI Taxonomy" id="1140"/>
    <lineage>
        <taxon>Bacteria</taxon>
        <taxon>Bacillati</taxon>
        <taxon>Cyanobacteriota</taxon>
        <taxon>Cyanophyceae</taxon>
        <taxon>Synechococcales</taxon>
        <taxon>Synechococcaceae</taxon>
        <taxon>Synechococcus</taxon>
    </lineage>
</organism>
<sequence length="296" mass="33275">MLADSSQPSSFHHVTVLQRELVEGLLPDRGGWFLDATLGGGGHSELLLSEWPNTQVIGLDRDPAAIAASQTRLQLYSDRVQFQHVNFANYQPGDRRFQGIMADLGVSSPQLDEAERGFSFRQDAPLDMRMDPTAELTAAAIVNEWDETDLANLIYQYGEERLSRRIARRIVEQRPFERTLELSEAIAGAVPRSYRYGRIHPATRTFQALRIAVNGELDALQTFLDRAPDWLAPGGRIALISFHSLEDRIIKHALRGDDRLTVITRKPLLPSEAEIESNPRSRSAKLRIAERVLPES</sequence>
<keyword id="KW-0963">Cytoplasm</keyword>
<keyword id="KW-0489">Methyltransferase</keyword>
<keyword id="KW-1185">Reference proteome</keyword>
<keyword id="KW-0698">rRNA processing</keyword>
<keyword id="KW-0949">S-adenosyl-L-methionine</keyword>
<keyword id="KW-0808">Transferase</keyword>
<gene>
    <name evidence="1" type="primary">rsmH</name>
    <name type="synonym">mraW</name>
    <name type="ordered locus">Synpcc7942_0975</name>
</gene>
<dbReference type="EC" id="2.1.1.199" evidence="1"/>
<dbReference type="EMBL" id="CP000100">
    <property type="protein sequence ID" value="ABB57005.1"/>
    <property type="molecule type" value="Genomic_DNA"/>
</dbReference>
<dbReference type="RefSeq" id="WP_011242881.1">
    <property type="nucleotide sequence ID" value="NZ_JACJTX010000003.1"/>
</dbReference>
<dbReference type="SMR" id="Q31PL4"/>
<dbReference type="STRING" id="1140.Synpcc7942_0975"/>
<dbReference type="PaxDb" id="1140-Synpcc7942_0975"/>
<dbReference type="GeneID" id="72429826"/>
<dbReference type="KEGG" id="syf:Synpcc7942_0975"/>
<dbReference type="eggNOG" id="COG0275">
    <property type="taxonomic scope" value="Bacteria"/>
</dbReference>
<dbReference type="HOGENOM" id="CLU_038422_3_0_3"/>
<dbReference type="OrthoDB" id="9806637at2"/>
<dbReference type="BioCyc" id="SYNEL:SYNPCC7942_0975-MONOMER"/>
<dbReference type="Proteomes" id="UP000889800">
    <property type="component" value="Chromosome"/>
</dbReference>
<dbReference type="GO" id="GO:0005737">
    <property type="term" value="C:cytoplasm"/>
    <property type="evidence" value="ECO:0007669"/>
    <property type="project" value="UniProtKB-SubCell"/>
</dbReference>
<dbReference type="GO" id="GO:0071424">
    <property type="term" value="F:rRNA (cytosine-N4-)-methyltransferase activity"/>
    <property type="evidence" value="ECO:0007669"/>
    <property type="project" value="UniProtKB-UniRule"/>
</dbReference>
<dbReference type="GO" id="GO:0070475">
    <property type="term" value="P:rRNA base methylation"/>
    <property type="evidence" value="ECO:0007669"/>
    <property type="project" value="UniProtKB-UniRule"/>
</dbReference>
<dbReference type="CDD" id="cd02440">
    <property type="entry name" value="AdoMet_MTases"/>
    <property type="match status" value="1"/>
</dbReference>
<dbReference type="Gene3D" id="1.10.150.170">
    <property type="entry name" value="Putative methyltransferase TM0872, insert domain"/>
    <property type="match status" value="1"/>
</dbReference>
<dbReference type="Gene3D" id="3.40.50.150">
    <property type="entry name" value="Vaccinia Virus protein VP39"/>
    <property type="match status" value="1"/>
</dbReference>
<dbReference type="HAMAP" id="MF_01007">
    <property type="entry name" value="16SrRNA_methyltr_H"/>
    <property type="match status" value="1"/>
</dbReference>
<dbReference type="InterPro" id="IPR002903">
    <property type="entry name" value="RsmH"/>
</dbReference>
<dbReference type="InterPro" id="IPR023397">
    <property type="entry name" value="SAM-dep_MeTrfase_MraW_recog"/>
</dbReference>
<dbReference type="InterPro" id="IPR029063">
    <property type="entry name" value="SAM-dependent_MTases_sf"/>
</dbReference>
<dbReference type="NCBIfam" id="TIGR00006">
    <property type="entry name" value="16S rRNA (cytosine(1402)-N(4))-methyltransferase RsmH"/>
    <property type="match status" value="1"/>
</dbReference>
<dbReference type="PANTHER" id="PTHR11265:SF0">
    <property type="entry name" value="12S RRNA N4-METHYLCYTIDINE METHYLTRANSFERASE"/>
    <property type="match status" value="1"/>
</dbReference>
<dbReference type="PANTHER" id="PTHR11265">
    <property type="entry name" value="S-ADENOSYL-METHYLTRANSFERASE MRAW"/>
    <property type="match status" value="1"/>
</dbReference>
<dbReference type="Pfam" id="PF01795">
    <property type="entry name" value="Methyltransf_5"/>
    <property type="match status" value="1"/>
</dbReference>
<dbReference type="PIRSF" id="PIRSF004486">
    <property type="entry name" value="MraW"/>
    <property type="match status" value="1"/>
</dbReference>
<dbReference type="SUPFAM" id="SSF81799">
    <property type="entry name" value="Putative methyltransferase TM0872, insert domain"/>
    <property type="match status" value="1"/>
</dbReference>
<dbReference type="SUPFAM" id="SSF53335">
    <property type="entry name" value="S-adenosyl-L-methionine-dependent methyltransferases"/>
    <property type="match status" value="1"/>
</dbReference>
<evidence type="ECO:0000255" key="1">
    <source>
        <dbReference type="HAMAP-Rule" id="MF_01007"/>
    </source>
</evidence>
<accession>Q31PL4</accession>
<name>RSMH_SYNE7</name>
<protein>
    <recommendedName>
        <fullName evidence="1">Ribosomal RNA small subunit methyltransferase H</fullName>
        <ecNumber evidence="1">2.1.1.199</ecNumber>
    </recommendedName>
    <alternativeName>
        <fullName evidence="1">16S rRNA m(4)C1402 methyltransferase</fullName>
    </alternativeName>
    <alternativeName>
        <fullName evidence="1">rRNA (cytosine-N(4)-)-methyltransferase RsmH</fullName>
    </alternativeName>
</protein>
<feature type="chain" id="PRO_0000387177" description="Ribosomal RNA small subunit methyltransferase H">
    <location>
        <begin position="1"/>
        <end position="296"/>
    </location>
</feature>
<feature type="binding site" evidence="1">
    <location>
        <begin position="41"/>
        <end position="43"/>
    </location>
    <ligand>
        <name>S-adenosyl-L-methionine</name>
        <dbReference type="ChEBI" id="CHEBI:59789"/>
    </ligand>
</feature>
<feature type="binding site" evidence="1">
    <location>
        <position position="60"/>
    </location>
    <ligand>
        <name>S-adenosyl-L-methionine</name>
        <dbReference type="ChEBI" id="CHEBI:59789"/>
    </ligand>
</feature>
<feature type="binding site" evidence="1">
    <location>
        <position position="87"/>
    </location>
    <ligand>
        <name>S-adenosyl-L-methionine</name>
        <dbReference type="ChEBI" id="CHEBI:59789"/>
    </ligand>
</feature>
<feature type="binding site" evidence="1">
    <location>
        <position position="103"/>
    </location>
    <ligand>
        <name>S-adenosyl-L-methionine</name>
        <dbReference type="ChEBI" id="CHEBI:59789"/>
    </ligand>
</feature>
<feature type="binding site" evidence="1">
    <location>
        <position position="110"/>
    </location>
    <ligand>
        <name>S-adenosyl-L-methionine</name>
        <dbReference type="ChEBI" id="CHEBI:59789"/>
    </ligand>
</feature>
<reference key="1">
    <citation type="submission" date="2005-08" db="EMBL/GenBank/DDBJ databases">
        <title>Complete sequence of chromosome 1 of Synechococcus elongatus PCC 7942.</title>
        <authorList>
            <consortium name="US DOE Joint Genome Institute"/>
            <person name="Copeland A."/>
            <person name="Lucas S."/>
            <person name="Lapidus A."/>
            <person name="Barry K."/>
            <person name="Detter J.C."/>
            <person name="Glavina T."/>
            <person name="Hammon N."/>
            <person name="Israni S."/>
            <person name="Pitluck S."/>
            <person name="Schmutz J."/>
            <person name="Larimer F."/>
            <person name="Land M."/>
            <person name="Kyrpides N."/>
            <person name="Lykidis A."/>
            <person name="Golden S."/>
            <person name="Richardson P."/>
        </authorList>
    </citation>
    <scope>NUCLEOTIDE SEQUENCE [LARGE SCALE GENOMIC DNA]</scope>
    <source>
        <strain>ATCC 33912 / PCC 7942 / FACHB-805</strain>
    </source>
</reference>